<keyword id="KW-1185">Reference proteome</keyword>
<keyword id="KW-0687">Ribonucleoprotein</keyword>
<keyword id="KW-0689">Ribosomal protein</keyword>
<sequence length="114" mass="13167">MQQLIAEITKGQLKTDLPSFRPGDTLRVHVKVVEGTRERIQLFEGVVIKRRGGGISETFTVRKISYGVGVERTFPVHTPRIAKIEVLRRGKVRRAKLYYLRNLRGKKARIKEIR</sequence>
<reference key="1">
    <citation type="journal article" date="2003" name="Nature">
        <title>Genome sequence of Bacillus cereus and comparative analysis with Bacillus anthracis.</title>
        <authorList>
            <person name="Ivanova N."/>
            <person name="Sorokin A."/>
            <person name="Anderson I."/>
            <person name="Galleron N."/>
            <person name="Candelon B."/>
            <person name="Kapatral V."/>
            <person name="Bhattacharyya A."/>
            <person name="Reznik G."/>
            <person name="Mikhailova N."/>
            <person name="Lapidus A."/>
            <person name="Chu L."/>
            <person name="Mazur M."/>
            <person name="Goltsman E."/>
            <person name="Larsen N."/>
            <person name="D'Souza M."/>
            <person name="Walunas T."/>
            <person name="Grechkin Y."/>
            <person name="Pusch G."/>
            <person name="Haselkorn R."/>
            <person name="Fonstein M."/>
            <person name="Ehrlich S.D."/>
            <person name="Overbeek R."/>
            <person name="Kyrpides N.C."/>
        </authorList>
    </citation>
    <scope>NUCLEOTIDE SEQUENCE [LARGE SCALE GENOMIC DNA]</scope>
    <source>
        <strain>ATCC 14579 / DSM 31 / CCUG 7414 / JCM 2152 / NBRC 15305 / NCIMB 9373 / NCTC 2599 / NRRL B-3711</strain>
    </source>
</reference>
<name>RL19_BACCR</name>
<feature type="chain" id="PRO_0000163405" description="Large ribosomal subunit protein bL19">
    <location>
        <begin position="1"/>
        <end position="114"/>
    </location>
</feature>
<protein>
    <recommendedName>
        <fullName evidence="1">Large ribosomal subunit protein bL19</fullName>
    </recommendedName>
    <alternativeName>
        <fullName evidence="2">50S ribosomal protein L19</fullName>
    </alternativeName>
</protein>
<evidence type="ECO:0000255" key="1">
    <source>
        <dbReference type="HAMAP-Rule" id="MF_00402"/>
    </source>
</evidence>
<evidence type="ECO:0000305" key="2"/>
<gene>
    <name evidence="1" type="primary">rplS</name>
    <name type="ordered locus">BC_3838</name>
</gene>
<proteinExistence type="inferred from homology"/>
<organism>
    <name type="scientific">Bacillus cereus (strain ATCC 14579 / DSM 31 / CCUG 7414 / JCM 2152 / NBRC 15305 / NCIMB 9373 / NCTC 2599 / NRRL B-3711)</name>
    <dbReference type="NCBI Taxonomy" id="226900"/>
    <lineage>
        <taxon>Bacteria</taxon>
        <taxon>Bacillati</taxon>
        <taxon>Bacillota</taxon>
        <taxon>Bacilli</taxon>
        <taxon>Bacillales</taxon>
        <taxon>Bacillaceae</taxon>
        <taxon>Bacillus</taxon>
        <taxon>Bacillus cereus group</taxon>
    </lineage>
</organism>
<accession>Q819W6</accession>
<dbReference type="EMBL" id="AE016877">
    <property type="protein sequence ID" value="AAP10760.1"/>
    <property type="molecule type" value="Genomic_DNA"/>
</dbReference>
<dbReference type="RefSeq" id="NP_833559.1">
    <property type="nucleotide sequence ID" value="NC_004722.1"/>
</dbReference>
<dbReference type="RefSeq" id="WP_001186516.1">
    <property type="nucleotide sequence ID" value="NZ_CP138336.1"/>
</dbReference>
<dbReference type="SMR" id="Q819W6"/>
<dbReference type="STRING" id="226900.BC_3838"/>
<dbReference type="MetOSite" id="Q819W6"/>
<dbReference type="GeneID" id="93007272"/>
<dbReference type="KEGG" id="bce:BC3838"/>
<dbReference type="PATRIC" id="fig|226900.8.peg.3957"/>
<dbReference type="HOGENOM" id="CLU_103507_2_1_9"/>
<dbReference type="OrthoDB" id="9803541at2"/>
<dbReference type="PRO" id="PR:Q819W6"/>
<dbReference type="Proteomes" id="UP000001417">
    <property type="component" value="Chromosome"/>
</dbReference>
<dbReference type="GO" id="GO:0022625">
    <property type="term" value="C:cytosolic large ribosomal subunit"/>
    <property type="evidence" value="ECO:0000318"/>
    <property type="project" value="GO_Central"/>
</dbReference>
<dbReference type="GO" id="GO:0003735">
    <property type="term" value="F:structural constituent of ribosome"/>
    <property type="evidence" value="ECO:0000318"/>
    <property type="project" value="GO_Central"/>
</dbReference>
<dbReference type="GO" id="GO:0006412">
    <property type="term" value="P:translation"/>
    <property type="evidence" value="ECO:0007669"/>
    <property type="project" value="UniProtKB-UniRule"/>
</dbReference>
<dbReference type="FunFam" id="2.30.30.790:FF:000001">
    <property type="entry name" value="50S ribosomal protein L19"/>
    <property type="match status" value="1"/>
</dbReference>
<dbReference type="Gene3D" id="2.30.30.790">
    <property type="match status" value="1"/>
</dbReference>
<dbReference type="HAMAP" id="MF_00402">
    <property type="entry name" value="Ribosomal_bL19"/>
    <property type="match status" value="1"/>
</dbReference>
<dbReference type="InterPro" id="IPR001857">
    <property type="entry name" value="Ribosomal_bL19"/>
</dbReference>
<dbReference type="InterPro" id="IPR018257">
    <property type="entry name" value="Ribosomal_bL19_CS"/>
</dbReference>
<dbReference type="InterPro" id="IPR038657">
    <property type="entry name" value="Ribosomal_bL19_sf"/>
</dbReference>
<dbReference type="InterPro" id="IPR008991">
    <property type="entry name" value="Translation_prot_SH3-like_sf"/>
</dbReference>
<dbReference type="NCBIfam" id="TIGR01024">
    <property type="entry name" value="rplS_bact"/>
    <property type="match status" value="1"/>
</dbReference>
<dbReference type="PANTHER" id="PTHR15680:SF9">
    <property type="entry name" value="LARGE RIBOSOMAL SUBUNIT PROTEIN BL19M"/>
    <property type="match status" value="1"/>
</dbReference>
<dbReference type="PANTHER" id="PTHR15680">
    <property type="entry name" value="RIBOSOMAL PROTEIN L19"/>
    <property type="match status" value="1"/>
</dbReference>
<dbReference type="Pfam" id="PF01245">
    <property type="entry name" value="Ribosomal_L19"/>
    <property type="match status" value="1"/>
</dbReference>
<dbReference type="PIRSF" id="PIRSF002191">
    <property type="entry name" value="Ribosomal_L19"/>
    <property type="match status" value="1"/>
</dbReference>
<dbReference type="PRINTS" id="PR00061">
    <property type="entry name" value="RIBOSOMALL19"/>
</dbReference>
<dbReference type="SUPFAM" id="SSF50104">
    <property type="entry name" value="Translation proteins SH3-like domain"/>
    <property type="match status" value="1"/>
</dbReference>
<dbReference type="PROSITE" id="PS01015">
    <property type="entry name" value="RIBOSOMAL_L19"/>
    <property type="match status" value="1"/>
</dbReference>
<comment type="function">
    <text evidence="1">This protein is located at the 30S-50S ribosomal subunit interface and may play a role in the structure and function of the aminoacyl-tRNA binding site.</text>
</comment>
<comment type="similarity">
    <text evidence="1">Belongs to the bacterial ribosomal protein bL19 family.</text>
</comment>